<dbReference type="EMBL" id="CR859192">
    <property type="protein sequence ID" value="CAH91379.1"/>
    <property type="molecule type" value="mRNA"/>
</dbReference>
<dbReference type="RefSeq" id="NP_001127411.1">
    <property type="nucleotide sequence ID" value="NM_001133939.1"/>
</dbReference>
<dbReference type="BMRB" id="Q5RA31"/>
<dbReference type="SMR" id="Q5RA31"/>
<dbReference type="FunCoup" id="Q5RA31">
    <property type="interactions" value="1570"/>
</dbReference>
<dbReference type="STRING" id="9601.ENSPPYP00000000099"/>
<dbReference type="Ensembl" id="ENSPPYT00000062118.1">
    <property type="protein sequence ID" value="ENSPPYP00000044608.1"/>
    <property type="gene ID" value="ENSPPYG00000034000.1"/>
</dbReference>
<dbReference type="GeneID" id="100174481"/>
<dbReference type="KEGG" id="pon:100174481"/>
<dbReference type="CTD" id="9804"/>
<dbReference type="eggNOG" id="KOG4056">
    <property type="taxonomic scope" value="Eukaryota"/>
</dbReference>
<dbReference type="GeneTree" id="ENSGT00390000011698"/>
<dbReference type="HOGENOM" id="CLU_100000_0_0_1"/>
<dbReference type="InParanoid" id="Q5RA31"/>
<dbReference type="OMA" id="PPPIFQI"/>
<dbReference type="OrthoDB" id="2154253at2759"/>
<dbReference type="TreeFam" id="TF106200"/>
<dbReference type="Proteomes" id="UP000001595">
    <property type="component" value="Chromosome 1"/>
</dbReference>
<dbReference type="GO" id="GO:0005742">
    <property type="term" value="C:mitochondrial outer membrane translocase complex"/>
    <property type="evidence" value="ECO:0007669"/>
    <property type="project" value="InterPro"/>
</dbReference>
<dbReference type="GO" id="GO:0097225">
    <property type="term" value="C:sperm midpiece"/>
    <property type="evidence" value="ECO:0000250"/>
    <property type="project" value="UniProtKB"/>
</dbReference>
<dbReference type="GO" id="GO:0030943">
    <property type="term" value="F:mitochondrion targeting sequence binding"/>
    <property type="evidence" value="ECO:0007669"/>
    <property type="project" value="TreeGrafter"/>
</dbReference>
<dbReference type="GO" id="GO:0008320">
    <property type="term" value="F:protein transmembrane transporter activity"/>
    <property type="evidence" value="ECO:0007669"/>
    <property type="project" value="TreeGrafter"/>
</dbReference>
<dbReference type="GO" id="GO:0006886">
    <property type="term" value="P:intracellular protein transport"/>
    <property type="evidence" value="ECO:0007669"/>
    <property type="project" value="InterPro"/>
</dbReference>
<dbReference type="GO" id="GO:0030150">
    <property type="term" value="P:protein import into mitochondrial matrix"/>
    <property type="evidence" value="ECO:0007669"/>
    <property type="project" value="TreeGrafter"/>
</dbReference>
<dbReference type="GO" id="GO:0006626">
    <property type="term" value="P:protein targeting to mitochondrion"/>
    <property type="evidence" value="ECO:0000250"/>
    <property type="project" value="UniProtKB"/>
</dbReference>
<dbReference type="GO" id="GO:0016031">
    <property type="term" value="P:tRNA import into mitochondrion"/>
    <property type="evidence" value="ECO:0007669"/>
    <property type="project" value="TreeGrafter"/>
</dbReference>
<dbReference type="FunFam" id="1.20.960.10:FF:000001">
    <property type="entry name" value="Mitochondrial import receptor subunit TOM20 homolog"/>
    <property type="match status" value="1"/>
</dbReference>
<dbReference type="Gene3D" id="1.20.960.10">
    <property type="entry name" value="Mitochondrial outer membrane translocase complex, subunit Tom20 domain"/>
    <property type="match status" value="1"/>
</dbReference>
<dbReference type="InterPro" id="IPR002056">
    <property type="entry name" value="MAS20"/>
</dbReference>
<dbReference type="InterPro" id="IPR022422">
    <property type="entry name" value="MAS20_rcpt_metazoan"/>
</dbReference>
<dbReference type="InterPro" id="IPR023392">
    <property type="entry name" value="Tom20_dom_sf"/>
</dbReference>
<dbReference type="NCBIfam" id="TIGR00985">
    <property type="entry name" value="3a0801s04tom"/>
    <property type="match status" value="1"/>
</dbReference>
<dbReference type="PANTHER" id="PTHR12430">
    <property type="entry name" value="MITOCHONDRIAL IMPORT RECEPTOR SUBUNIT TOM20"/>
    <property type="match status" value="1"/>
</dbReference>
<dbReference type="PANTHER" id="PTHR12430:SF2">
    <property type="entry name" value="MITOCHONDRIAL IMPORT RECEPTOR SUBUNIT TOM20 HOMOLOG"/>
    <property type="match status" value="1"/>
</dbReference>
<dbReference type="Pfam" id="PF02064">
    <property type="entry name" value="MAS20"/>
    <property type="match status" value="1"/>
</dbReference>
<dbReference type="PIRSF" id="PIRSF037707">
    <property type="entry name" value="MAS20_rcpt"/>
    <property type="match status" value="1"/>
</dbReference>
<dbReference type="PRINTS" id="PR01989">
    <property type="entry name" value="EUOM20RECPTR"/>
</dbReference>
<dbReference type="PRINTS" id="PR00351">
    <property type="entry name" value="OM20RECEPTOR"/>
</dbReference>
<dbReference type="SUPFAM" id="SSF47157">
    <property type="entry name" value="Mitochondrial import receptor subunit Tom20"/>
    <property type="match status" value="1"/>
</dbReference>
<reference key="1">
    <citation type="submission" date="2004-11" db="EMBL/GenBank/DDBJ databases">
        <authorList>
            <consortium name="The German cDNA consortium"/>
        </authorList>
    </citation>
    <scope>NUCLEOTIDE SEQUENCE [LARGE SCALE MRNA]</scope>
    <source>
        <tissue>Brain cortex</tissue>
    </source>
</reference>
<protein>
    <recommendedName>
        <fullName>Mitochondrial import receptor subunit TOM20 homolog</fullName>
    </recommendedName>
    <alternativeName>
        <fullName>Mitochondrial 20 kDa outer membrane protein</fullName>
    </alternativeName>
    <alternativeName>
        <fullName>Outer mitochondrial membrane receptor Tom20</fullName>
    </alternativeName>
</protein>
<sequence length="145" mass="16298">MVGRNSAIAAGVCGALFIGYCIYFDRKRRSDPNFKNRLRERRKKQKLAKERAGLSKLPDLKDAEAVQKFFLEEIQLGEELLAQGEYEKGVDHLTNAIAVCGQPQQLLQVLQQTLPPPVFQMLLTKLPTISQRIVSAQSLAEDDVE</sequence>
<organism>
    <name type="scientific">Pongo abelii</name>
    <name type="common">Sumatran orangutan</name>
    <name type="synonym">Pongo pygmaeus abelii</name>
    <dbReference type="NCBI Taxonomy" id="9601"/>
    <lineage>
        <taxon>Eukaryota</taxon>
        <taxon>Metazoa</taxon>
        <taxon>Chordata</taxon>
        <taxon>Craniata</taxon>
        <taxon>Vertebrata</taxon>
        <taxon>Euteleostomi</taxon>
        <taxon>Mammalia</taxon>
        <taxon>Eutheria</taxon>
        <taxon>Euarchontoglires</taxon>
        <taxon>Primates</taxon>
        <taxon>Haplorrhini</taxon>
        <taxon>Catarrhini</taxon>
        <taxon>Hominidae</taxon>
        <taxon>Pongo</taxon>
    </lineage>
</organism>
<feature type="chain" id="PRO_0000051540" description="Mitochondrial import receptor subunit TOM20 homolog">
    <location>
        <begin position="1"/>
        <end position="145"/>
    </location>
</feature>
<feature type="topological domain" description="Mitochondrial intermembrane" evidence="5">
    <location>
        <begin position="1"/>
        <end position="6"/>
    </location>
</feature>
<feature type="transmembrane region" description="Helical" evidence="5">
    <location>
        <begin position="7"/>
        <end position="24"/>
    </location>
</feature>
<feature type="topological domain" description="Cytoplasmic" evidence="5">
    <location>
        <begin position="25"/>
        <end position="145"/>
    </location>
</feature>
<feature type="modified residue" description="Phosphoserine" evidence="2">
    <location>
        <position position="135"/>
    </location>
</feature>
<feature type="modified residue" description="Phosphoserine" evidence="2">
    <location>
        <position position="138"/>
    </location>
</feature>
<feature type="cross-link" description="Glycyl lysine isopeptide (Lys-Gly) (interchain with G-Cter in ubiquitin)" evidence="2">
    <location>
        <position position="35"/>
    </location>
</feature>
<feature type="cross-link" description="Glycyl lysine isopeptide (Lys-Gly) (interchain with G-Cter in ubiquitin)" evidence="2">
    <location>
        <position position="56"/>
    </location>
</feature>
<feature type="cross-link" description="Glycyl lysine isopeptide (Lys-Gly) (interchain with G-Cter in ubiquitin)" evidence="2">
    <location>
        <position position="61"/>
    </location>
</feature>
<feature type="cross-link" description="Glycyl lysine isopeptide (Lys-Gly) (interchain with G-Cter in ubiquitin)" evidence="2">
    <location>
        <position position="68"/>
    </location>
</feature>
<proteinExistence type="evidence at transcript level"/>
<name>TOM20_PONAB</name>
<keyword id="KW-1017">Isopeptide bond</keyword>
<keyword id="KW-0472">Membrane</keyword>
<keyword id="KW-0496">Mitochondrion</keyword>
<keyword id="KW-1000">Mitochondrion outer membrane</keyword>
<keyword id="KW-0597">Phosphoprotein</keyword>
<keyword id="KW-0653">Protein transport</keyword>
<keyword id="KW-1185">Reference proteome</keyword>
<keyword id="KW-0812">Transmembrane</keyword>
<keyword id="KW-1133">Transmembrane helix</keyword>
<keyword id="KW-0813">Transport</keyword>
<keyword id="KW-0832">Ubl conjugation</keyword>
<accession>Q5RA31</accession>
<gene>
    <name type="primary">TOMM20</name>
</gene>
<evidence type="ECO:0000250" key="1"/>
<evidence type="ECO:0000250" key="2">
    <source>
        <dbReference type="UniProtKB" id="Q15388"/>
    </source>
</evidence>
<evidence type="ECO:0000250" key="3">
    <source>
        <dbReference type="UniProtKB" id="Q62760"/>
    </source>
</evidence>
<evidence type="ECO:0000250" key="4">
    <source>
        <dbReference type="UniProtKB" id="Q9DCC8"/>
    </source>
</evidence>
<evidence type="ECO:0000255" key="5"/>
<evidence type="ECO:0000305" key="6"/>
<comment type="function">
    <text evidence="1 3">Central component of the receptor complex responsible for the recognition and translocation of cytosolically synthesized mitochondrial preproteins. Together with TOM22 functions as the transit peptide receptor at the surface of the mitochondrion outer membrane and facilitates the movement of preproteins into the TOM40 translocation pore (By similarity). Required for the translocation across the mitochondrial outer membrane of cytochrome P450 monooxygenases.</text>
</comment>
<comment type="subunit">
    <text evidence="2 4">Forms part of the preprotein translocase complex of the outer mitochondrial membrane (TOM complex) which consists of at least 7 different proteins (TOMM5, TOMM6, TOMM7, TOMM20, TOMM22, TOMM40 and TOMM70). Interacts with TOM22. Interacts with APEX1 (By similarity). Interacts with TBC1D21 (By similarity). Upon mitochondrial depolarization, interacts with PINK1; the interaction is required for PINK1-TOM-TIM23 supercomplex formation which is critical for PINK1 stabilization at the outer mitochondrial membrane, kinase activation and downstream mitophagy (By similarity).</text>
</comment>
<comment type="subcellular location">
    <subcellularLocation>
        <location evidence="2">Mitochondrion outer membrane</location>
        <topology evidence="5">Single-pass membrane protein</topology>
    </subcellularLocation>
</comment>
<comment type="PTM">
    <text evidence="2">Ubiquitinated by PRKN during mitophagy, leading to its degradation and enhancement of mitophagy. Deubiquitinated by USP30.</text>
</comment>
<comment type="similarity">
    <text evidence="6">Belongs to the Tom20 family.</text>
</comment>